<protein>
    <recommendedName>
        <fullName>Surfactant-associated protein 2</fullName>
    </recommendedName>
    <alternativeName>
        <fullName>Surfactant-associated protein G</fullName>
    </alternativeName>
</protein>
<keyword id="KW-0968">Cytoplasmic vesicle</keyword>
<keyword id="KW-0325">Glycoprotein</keyword>
<keyword id="KW-0333">Golgi apparatus</keyword>
<keyword id="KW-1185">Reference proteome</keyword>
<keyword id="KW-0964">Secreted</keyword>
<keyword id="KW-0732">Signal</keyword>
<proteinExistence type="inferred from homology"/>
<feature type="signal peptide" evidence="1">
    <location>
        <begin position="1"/>
        <end position="19"/>
    </location>
</feature>
<feature type="chain" id="PRO_0000353119" description="Surfactant-associated protein 2">
    <location>
        <begin position="20"/>
        <end position="78"/>
    </location>
</feature>
<feature type="glycosylation site" description="N-linked (GlcNAc...) asparagine" evidence="3">
    <location>
        <position position="37"/>
    </location>
</feature>
<reference key="1">
    <citation type="submission" date="2006-10" db="EMBL/GenBank/DDBJ databases">
        <authorList>
            <consortium name="NIH - Mammalian Gene Collection (MGC) project"/>
        </authorList>
    </citation>
    <scope>NUCLEOTIDE SEQUENCE [LARGE SCALE MRNA]</scope>
    <source>
        <strain>Hereford</strain>
        <tissue>Fetal lung</tissue>
    </source>
</reference>
<evidence type="ECO:0000250" key="1"/>
<evidence type="ECO:0000250" key="2">
    <source>
        <dbReference type="UniProtKB" id="Q6UW10"/>
    </source>
</evidence>
<evidence type="ECO:0000255" key="3"/>
<evidence type="ECO:0000305" key="4"/>
<sequence>MGAGLPLVLLLTLVGSSQGAGPGMTLQLKLKNSLLANSSYNSSFLDFLQKFCLLLHLPLGTNVTLHQAGSSQHVTCRV</sequence>
<organism>
    <name type="scientific">Bos taurus</name>
    <name type="common">Bovine</name>
    <dbReference type="NCBI Taxonomy" id="9913"/>
    <lineage>
        <taxon>Eukaryota</taxon>
        <taxon>Metazoa</taxon>
        <taxon>Chordata</taxon>
        <taxon>Craniata</taxon>
        <taxon>Vertebrata</taxon>
        <taxon>Euteleostomi</taxon>
        <taxon>Mammalia</taxon>
        <taxon>Eutheria</taxon>
        <taxon>Laurasiatheria</taxon>
        <taxon>Artiodactyla</taxon>
        <taxon>Ruminantia</taxon>
        <taxon>Pecora</taxon>
        <taxon>Bovidae</taxon>
        <taxon>Bovinae</taxon>
        <taxon>Bos</taxon>
    </lineage>
</organism>
<name>SFTA2_BOVIN</name>
<dbReference type="EMBL" id="BC126804">
    <property type="protein sequence ID" value="AAI26805.1"/>
    <property type="molecule type" value="mRNA"/>
</dbReference>
<dbReference type="RefSeq" id="NP_001107995.1">
    <property type="nucleotide sequence ID" value="NM_001114523.2"/>
</dbReference>
<dbReference type="SMR" id="A0JNN2"/>
<dbReference type="FunCoup" id="A0JNN2">
    <property type="interactions" value="3"/>
</dbReference>
<dbReference type="STRING" id="9913.ENSBTAP00000049051"/>
<dbReference type="GlyCosmos" id="A0JNN2">
    <property type="glycosylation" value="1 site, No reported glycans"/>
</dbReference>
<dbReference type="GlyGen" id="A0JNN2">
    <property type="glycosylation" value="1 site"/>
</dbReference>
<dbReference type="PaxDb" id="9913-ENSBTAP00000049051"/>
<dbReference type="Ensembl" id="ENSBTAT00000054396.3">
    <property type="protein sequence ID" value="ENSBTAP00000049051.1"/>
    <property type="gene ID" value="ENSBTAG00000038810.3"/>
</dbReference>
<dbReference type="GeneID" id="616978"/>
<dbReference type="KEGG" id="bta:616978"/>
<dbReference type="CTD" id="389376"/>
<dbReference type="VEuPathDB" id="HostDB:ENSBTAG00000038810"/>
<dbReference type="VGNC" id="VGNC:34527">
    <property type="gene designation" value="SFTA2"/>
</dbReference>
<dbReference type="eggNOG" id="ENOG502TGNM">
    <property type="taxonomic scope" value="Eukaryota"/>
</dbReference>
<dbReference type="GeneTree" id="ENSGT00390000011767"/>
<dbReference type="HOGENOM" id="CLU_173432_0_0_1"/>
<dbReference type="InParanoid" id="A0JNN2"/>
<dbReference type="OMA" id="GPRMILQ"/>
<dbReference type="OrthoDB" id="9539469at2759"/>
<dbReference type="TreeFam" id="TF354134"/>
<dbReference type="Proteomes" id="UP000009136">
    <property type="component" value="Chromosome 23"/>
</dbReference>
<dbReference type="Bgee" id="ENSBTAG00000038810">
    <property type="expression patterns" value="Expressed in caput epididymis and 56 other cell types or tissues"/>
</dbReference>
<dbReference type="GO" id="GO:0005576">
    <property type="term" value="C:extracellular region"/>
    <property type="evidence" value="ECO:0007669"/>
    <property type="project" value="UniProtKB-SubCell"/>
</dbReference>
<dbReference type="GO" id="GO:0005794">
    <property type="term" value="C:Golgi apparatus"/>
    <property type="evidence" value="ECO:0007669"/>
    <property type="project" value="UniProtKB-SubCell"/>
</dbReference>
<dbReference type="GO" id="GO:0030133">
    <property type="term" value="C:transport vesicle"/>
    <property type="evidence" value="ECO:0007669"/>
    <property type="project" value="UniProtKB-SubCell"/>
</dbReference>
<dbReference type="InterPro" id="IPR028198">
    <property type="entry name" value="SFTA2"/>
</dbReference>
<dbReference type="PANTHER" id="PTHR38500">
    <property type="entry name" value="SURFACTANT-ASSOCIATED PROTEIN 2"/>
    <property type="match status" value="1"/>
</dbReference>
<dbReference type="PANTHER" id="PTHR38500:SF1">
    <property type="entry name" value="SURFACTANT-ASSOCIATED PROTEIN 2"/>
    <property type="match status" value="1"/>
</dbReference>
<dbReference type="Pfam" id="PF15210">
    <property type="entry name" value="SFTA2"/>
    <property type="match status" value="1"/>
</dbReference>
<gene>
    <name type="primary">SFTA2</name>
    <name type="synonym">SFTPG</name>
</gene>
<comment type="function">
    <text evidence="2">Putative surfactant protein.</text>
</comment>
<comment type="subcellular location">
    <subcellularLocation>
        <location evidence="4">Secreted</location>
    </subcellularLocation>
    <subcellularLocation>
        <location evidence="2">Cytoplasmic vesicle</location>
        <location evidence="2">Secretory vesicle</location>
    </subcellularLocation>
    <subcellularLocation>
        <location evidence="2">Golgi apparatus</location>
    </subcellularLocation>
</comment>
<comment type="PTM">
    <text evidence="2">N-glycosylated.</text>
</comment>
<accession>A0JNN2</accession>